<gene>
    <name evidence="1" type="primary">ruvB</name>
    <name type="ordered locus">Plav_2117</name>
</gene>
<sequence length="352" mass="37965">MTDRIVGAAKREEDELERSLRPQVLSDFVGQARARENLAVFIEAARTRAEALDHVLFAGPPGLGKTTLAQIVARELGVNFRATSGPVISKAGDLAALLTNLEPRDVLFIDEIHRLSPAVEEILYPAMEDFQLDLIIGEGPGARSVRIELAPFTLIGATTRTGLLTTPLRDRFGIPVRLHFYEVAELEGIVRRGASVLGVAMTPDGAHEIARRARGTPRVAGRLLRRVRDFASVEGVKSIDAKAADKALQRLEVDELGLDALDHRYLRCIAVSFSGGPVGVETIAASLSEPRDAIEEIIEPYLIQQGLVNRTPRGRTLTPAAFAHIGVALPAGRSGEPGQARLFDGDEENGSA</sequence>
<dbReference type="EC" id="3.6.4.-" evidence="1"/>
<dbReference type="EMBL" id="CP000774">
    <property type="protein sequence ID" value="ABS63731.1"/>
    <property type="molecule type" value="Genomic_DNA"/>
</dbReference>
<dbReference type="RefSeq" id="WP_012111035.1">
    <property type="nucleotide sequence ID" value="NC_009719.1"/>
</dbReference>
<dbReference type="SMR" id="A7HUZ8"/>
<dbReference type="STRING" id="402881.Plav_2117"/>
<dbReference type="KEGG" id="pla:Plav_2117"/>
<dbReference type="eggNOG" id="COG2255">
    <property type="taxonomic scope" value="Bacteria"/>
</dbReference>
<dbReference type="HOGENOM" id="CLU_055599_1_0_5"/>
<dbReference type="OrthoDB" id="9804478at2"/>
<dbReference type="Proteomes" id="UP000006377">
    <property type="component" value="Chromosome"/>
</dbReference>
<dbReference type="GO" id="GO:0005737">
    <property type="term" value="C:cytoplasm"/>
    <property type="evidence" value="ECO:0007669"/>
    <property type="project" value="UniProtKB-SubCell"/>
</dbReference>
<dbReference type="GO" id="GO:0048476">
    <property type="term" value="C:Holliday junction resolvase complex"/>
    <property type="evidence" value="ECO:0007669"/>
    <property type="project" value="UniProtKB-UniRule"/>
</dbReference>
<dbReference type="GO" id="GO:0005524">
    <property type="term" value="F:ATP binding"/>
    <property type="evidence" value="ECO:0007669"/>
    <property type="project" value="UniProtKB-UniRule"/>
</dbReference>
<dbReference type="GO" id="GO:0016887">
    <property type="term" value="F:ATP hydrolysis activity"/>
    <property type="evidence" value="ECO:0007669"/>
    <property type="project" value="InterPro"/>
</dbReference>
<dbReference type="GO" id="GO:0000400">
    <property type="term" value="F:four-way junction DNA binding"/>
    <property type="evidence" value="ECO:0007669"/>
    <property type="project" value="UniProtKB-UniRule"/>
</dbReference>
<dbReference type="GO" id="GO:0009378">
    <property type="term" value="F:four-way junction helicase activity"/>
    <property type="evidence" value="ECO:0007669"/>
    <property type="project" value="InterPro"/>
</dbReference>
<dbReference type="GO" id="GO:0006310">
    <property type="term" value="P:DNA recombination"/>
    <property type="evidence" value="ECO:0007669"/>
    <property type="project" value="UniProtKB-UniRule"/>
</dbReference>
<dbReference type="GO" id="GO:0006281">
    <property type="term" value="P:DNA repair"/>
    <property type="evidence" value="ECO:0007669"/>
    <property type="project" value="UniProtKB-UniRule"/>
</dbReference>
<dbReference type="CDD" id="cd00009">
    <property type="entry name" value="AAA"/>
    <property type="match status" value="1"/>
</dbReference>
<dbReference type="Gene3D" id="1.10.8.60">
    <property type="match status" value="1"/>
</dbReference>
<dbReference type="Gene3D" id="3.40.50.300">
    <property type="entry name" value="P-loop containing nucleotide triphosphate hydrolases"/>
    <property type="match status" value="1"/>
</dbReference>
<dbReference type="Gene3D" id="1.10.10.10">
    <property type="entry name" value="Winged helix-like DNA-binding domain superfamily/Winged helix DNA-binding domain"/>
    <property type="match status" value="1"/>
</dbReference>
<dbReference type="HAMAP" id="MF_00016">
    <property type="entry name" value="DNA_HJ_migration_RuvB"/>
    <property type="match status" value="1"/>
</dbReference>
<dbReference type="InterPro" id="IPR003593">
    <property type="entry name" value="AAA+_ATPase"/>
</dbReference>
<dbReference type="InterPro" id="IPR041445">
    <property type="entry name" value="AAA_lid_4"/>
</dbReference>
<dbReference type="InterPro" id="IPR004605">
    <property type="entry name" value="DNA_helicase_Holl-junc_RuvB"/>
</dbReference>
<dbReference type="InterPro" id="IPR027417">
    <property type="entry name" value="P-loop_NTPase"/>
</dbReference>
<dbReference type="InterPro" id="IPR008824">
    <property type="entry name" value="RuvB-like_N"/>
</dbReference>
<dbReference type="InterPro" id="IPR008823">
    <property type="entry name" value="RuvB_C"/>
</dbReference>
<dbReference type="InterPro" id="IPR036388">
    <property type="entry name" value="WH-like_DNA-bd_sf"/>
</dbReference>
<dbReference type="InterPro" id="IPR036390">
    <property type="entry name" value="WH_DNA-bd_sf"/>
</dbReference>
<dbReference type="NCBIfam" id="NF000868">
    <property type="entry name" value="PRK00080.1"/>
    <property type="match status" value="1"/>
</dbReference>
<dbReference type="NCBIfam" id="TIGR00635">
    <property type="entry name" value="ruvB"/>
    <property type="match status" value="1"/>
</dbReference>
<dbReference type="PANTHER" id="PTHR42848">
    <property type="match status" value="1"/>
</dbReference>
<dbReference type="PANTHER" id="PTHR42848:SF1">
    <property type="entry name" value="HOLLIDAY JUNCTION BRANCH MIGRATION COMPLEX SUBUNIT RUVB"/>
    <property type="match status" value="1"/>
</dbReference>
<dbReference type="Pfam" id="PF17864">
    <property type="entry name" value="AAA_lid_4"/>
    <property type="match status" value="1"/>
</dbReference>
<dbReference type="Pfam" id="PF05491">
    <property type="entry name" value="RuvB_C"/>
    <property type="match status" value="1"/>
</dbReference>
<dbReference type="Pfam" id="PF05496">
    <property type="entry name" value="RuvB_N"/>
    <property type="match status" value="1"/>
</dbReference>
<dbReference type="SMART" id="SM00382">
    <property type="entry name" value="AAA"/>
    <property type="match status" value="1"/>
</dbReference>
<dbReference type="SUPFAM" id="SSF52540">
    <property type="entry name" value="P-loop containing nucleoside triphosphate hydrolases"/>
    <property type="match status" value="1"/>
</dbReference>
<dbReference type="SUPFAM" id="SSF46785">
    <property type="entry name" value="Winged helix' DNA-binding domain"/>
    <property type="match status" value="1"/>
</dbReference>
<proteinExistence type="inferred from homology"/>
<keyword id="KW-0067">ATP-binding</keyword>
<keyword id="KW-0963">Cytoplasm</keyword>
<keyword id="KW-0227">DNA damage</keyword>
<keyword id="KW-0233">DNA recombination</keyword>
<keyword id="KW-0234">DNA repair</keyword>
<keyword id="KW-0238">DNA-binding</keyword>
<keyword id="KW-0378">Hydrolase</keyword>
<keyword id="KW-0547">Nucleotide-binding</keyword>
<keyword id="KW-1185">Reference proteome</keyword>
<accession>A7HUZ8</accession>
<comment type="function">
    <text evidence="1">The RuvA-RuvB-RuvC complex processes Holliday junction (HJ) DNA during genetic recombination and DNA repair, while the RuvA-RuvB complex plays an important role in the rescue of blocked DNA replication forks via replication fork reversal (RFR). RuvA specifically binds to HJ cruciform DNA, conferring on it an open structure. The RuvB hexamer acts as an ATP-dependent pump, pulling dsDNA into and through the RuvAB complex. RuvB forms 2 homohexamers on either side of HJ DNA bound by 1 or 2 RuvA tetramers; 4 subunits per hexamer contact DNA at a time. Coordinated motions by a converter formed by DNA-disengaged RuvB subunits stimulates ATP hydrolysis and nucleotide exchange. Immobilization of the converter enables RuvB to convert the ATP-contained energy into a lever motion, pulling 2 nucleotides of DNA out of the RuvA tetramer per ATP hydrolyzed, thus driving DNA branch migration. The RuvB motors rotate together with the DNA substrate, which together with the progressing nucleotide cycle form the mechanistic basis for DNA recombination by continuous HJ branch migration. Branch migration allows RuvC to scan DNA until it finds its consensus sequence, where it cleaves and resolves cruciform DNA.</text>
</comment>
<comment type="catalytic activity">
    <reaction evidence="1">
        <text>ATP + H2O = ADP + phosphate + H(+)</text>
        <dbReference type="Rhea" id="RHEA:13065"/>
        <dbReference type="ChEBI" id="CHEBI:15377"/>
        <dbReference type="ChEBI" id="CHEBI:15378"/>
        <dbReference type="ChEBI" id="CHEBI:30616"/>
        <dbReference type="ChEBI" id="CHEBI:43474"/>
        <dbReference type="ChEBI" id="CHEBI:456216"/>
    </reaction>
</comment>
<comment type="subunit">
    <text evidence="1">Homohexamer. Forms an RuvA(8)-RuvB(12)-Holliday junction (HJ) complex. HJ DNA is sandwiched between 2 RuvA tetramers; dsDNA enters through RuvA and exits via RuvB. An RuvB hexamer assembles on each DNA strand where it exits the tetramer. Each RuvB hexamer is contacted by two RuvA subunits (via domain III) on 2 adjacent RuvB subunits; this complex drives branch migration. In the full resolvosome a probable DNA-RuvA(4)-RuvB(12)-RuvC(2) complex forms which resolves the HJ.</text>
</comment>
<comment type="subcellular location">
    <subcellularLocation>
        <location evidence="1">Cytoplasm</location>
    </subcellularLocation>
</comment>
<comment type="domain">
    <text evidence="1">Has 3 domains, the large (RuvB-L) and small ATPase (RuvB-S) domains and the C-terminal head (RuvB-H) domain. The head domain binds DNA, while the ATPase domains jointly bind ATP, ADP or are empty depending on the state of the subunit in the translocation cycle. During a single DNA translocation step the structure of each domain remains the same, but their relative positions change.</text>
</comment>
<comment type="similarity">
    <text evidence="1">Belongs to the RuvB family.</text>
</comment>
<evidence type="ECO:0000255" key="1">
    <source>
        <dbReference type="HAMAP-Rule" id="MF_00016"/>
    </source>
</evidence>
<reference key="1">
    <citation type="journal article" date="2011" name="Stand. Genomic Sci.">
        <title>Complete genome sequence of Parvibaculum lavamentivorans type strain (DS-1(T)).</title>
        <authorList>
            <person name="Schleheck D."/>
            <person name="Weiss M."/>
            <person name="Pitluck S."/>
            <person name="Bruce D."/>
            <person name="Land M.L."/>
            <person name="Han S."/>
            <person name="Saunders E."/>
            <person name="Tapia R."/>
            <person name="Detter C."/>
            <person name="Brettin T."/>
            <person name="Han J."/>
            <person name="Woyke T."/>
            <person name="Goodwin L."/>
            <person name="Pennacchio L."/>
            <person name="Nolan M."/>
            <person name="Cook A.M."/>
            <person name="Kjelleberg S."/>
            <person name="Thomas T."/>
        </authorList>
    </citation>
    <scope>NUCLEOTIDE SEQUENCE [LARGE SCALE GENOMIC DNA]</scope>
    <source>
        <strain>DS-1 / DSM 13023 / NCIMB 13966</strain>
    </source>
</reference>
<organism>
    <name type="scientific">Parvibaculum lavamentivorans (strain DS-1 / DSM 13023 / NCIMB 13966)</name>
    <dbReference type="NCBI Taxonomy" id="402881"/>
    <lineage>
        <taxon>Bacteria</taxon>
        <taxon>Pseudomonadati</taxon>
        <taxon>Pseudomonadota</taxon>
        <taxon>Alphaproteobacteria</taxon>
        <taxon>Hyphomicrobiales</taxon>
        <taxon>Parvibaculaceae</taxon>
        <taxon>Parvibaculum</taxon>
    </lineage>
</organism>
<name>RUVB_PARL1</name>
<feature type="chain" id="PRO_0000322827" description="Holliday junction branch migration complex subunit RuvB">
    <location>
        <begin position="1"/>
        <end position="352"/>
    </location>
</feature>
<feature type="region of interest" description="Large ATPase domain (RuvB-L)" evidence="1">
    <location>
        <begin position="1"/>
        <end position="181"/>
    </location>
</feature>
<feature type="region of interest" description="Small ATPAse domain (RuvB-S)" evidence="1">
    <location>
        <begin position="182"/>
        <end position="252"/>
    </location>
</feature>
<feature type="region of interest" description="Head domain (RuvB-H)" evidence="1">
    <location>
        <begin position="255"/>
        <end position="352"/>
    </location>
</feature>
<feature type="binding site" evidence="1">
    <location>
        <position position="20"/>
    </location>
    <ligand>
        <name>ATP</name>
        <dbReference type="ChEBI" id="CHEBI:30616"/>
    </ligand>
</feature>
<feature type="binding site" evidence="1">
    <location>
        <position position="21"/>
    </location>
    <ligand>
        <name>ATP</name>
        <dbReference type="ChEBI" id="CHEBI:30616"/>
    </ligand>
</feature>
<feature type="binding site" evidence="1">
    <location>
        <position position="62"/>
    </location>
    <ligand>
        <name>ATP</name>
        <dbReference type="ChEBI" id="CHEBI:30616"/>
    </ligand>
</feature>
<feature type="binding site" evidence="1">
    <location>
        <position position="65"/>
    </location>
    <ligand>
        <name>ATP</name>
        <dbReference type="ChEBI" id="CHEBI:30616"/>
    </ligand>
</feature>
<feature type="binding site" evidence="1">
    <location>
        <position position="66"/>
    </location>
    <ligand>
        <name>ATP</name>
        <dbReference type="ChEBI" id="CHEBI:30616"/>
    </ligand>
</feature>
<feature type="binding site" evidence="1">
    <location>
        <position position="66"/>
    </location>
    <ligand>
        <name>Mg(2+)</name>
        <dbReference type="ChEBI" id="CHEBI:18420"/>
    </ligand>
</feature>
<feature type="binding site" evidence="1">
    <location>
        <position position="67"/>
    </location>
    <ligand>
        <name>ATP</name>
        <dbReference type="ChEBI" id="CHEBI:30616"/>
    </ligand>
</feature>
<feature type="binding site" evidence="1">
    <location>
        <begin position="128"/>
        <end position="130"/>
    </location>
    <ligand>
        <name>ATP</name>
        <dbReference type="ChEBI" id="CHEBI:30616"/>
    </ligand>
</feature>
<feature type="binding site" evidence="1">
    <location>
        <position position="171"/>
    </location>
    <ligand>
        <name>ATP</name>
        <dbReference type="ChEBI" id="CHEBI:30616"/>
    </ligand>
</feature>
<feature type="binding site" evidence="1">
    <location>
        <position position="181"/>
    </location>
    <ligand>
        <name>ATP</name>
        <dbReference type="ChEBI" id="CHEBI:30616"/>
    </ligand>
</feature>
<feature type="binding site" evidence="1">
    <location>
        <position position="218"/>
    </location>
    <ligand>
        <name>ATP</name>
        <dbReference type="ChEBI" id="CHEBI:30616"/>
    </ligand>
</feature>
<feature type="binding site" evidence="1">
    <location>
        <position position="291"/>
    </location>
    <ligand>
        <name>DNA</name>
        <dbReference type="ChEBI" id="CHEBI:16991"/>
    </ligand>
</feature>
<feature type="binding site" evidence="1">
    <location>
        <position position="310"/>
    </location>
    <ligand>
        <name>DNA</name>
        <dbReference type="ChEBI" id="CHEBI:16991"/>
    </ligand>
</feature>
<feature type="binding site" evidence="1">
    <location>
        <position position="315"/>
    </location>
    <ligand>
        <name>DNA</name>
        <dbReference type="ChEBI" id="CHEBI:16991"/>
    </ligand>
</feature>
<protein>
    <recommendedName>
        <fullName evidence="1">Holliday junction branch migration complex subunit RuvB</fullName>
        <ecNumber evidence="1">3.6.4.-</ecNumber>
    </recommendedName>
</protein>